<organism>
    <name type="scientific">Streptococcus pyogenes serotype M2 (strain MGAS10270)</name>
    <dbReference type="NCBI Taxonomy" id="370552"/>
    <lineage>
        <taxon>Bacteria</taxon>
        <taxon>Bacillati</taxon>
        <taxon>Bacillota</taxon>
        <taxon>Bacilli</taxon>
        <taxon>Lactobacillales</taxon>
        <taxon>Streptococcaceae</taxon>
        <taxon>Streptococcus</taxon>
    </lineage>
</organism>
<reference key="1">
    <citation type="journal article" date="2006" name="Proc. Natl. Acad. Sci. U.S.A.">
        <title>Molecular genetic anatomy of inter- and intraserotype variation in the human bacterial pathogen group A Streptococcus.</title>
        <authorList>
            <person name="Beres S.B."/>
            <person name="Richter E.W."/>
            <person name="Nagiec M.J."/>
            <person name="Sumby P."/>
            <person name="Porcella S.F."/>
            <person name="DeLeo F.R."/>
            <person name="Musser J.M."/>
        </authorList>
    </citation>
    <scope>NUCLEOTIDE SEQUENCE [LARGE SCALE GENOMIC DNA]</scope>
    <source>
        <strain>MGAS10270</strain>
    </source>
</reference>
<evidence type="ECO:0000255" key="1">
    <source>
        <dbReference type="HAMAP-Rule" id="MF_00052"/>
    </source>
</evidence>
<evidence type="ECO:0000255" key="2">
    <source>
        <dbReference type="PROSITE-ProRule" id="PRU01319"/>
    </source>
</evidence>
<accession>Q1JGT2</accession>
<sequence length="263" mass="28638">MSTSIKAIKESLEAVTSLLDPLFQELATDARLGVQKALKSRQKAIQADLAEEERLEAMLSYEKALYKEGYQAIAGIDEVGRGPLAGPVVAACVILPQHCKIKGLNDSKKIPKSKHETIYQAVKEKALAIGIGIIDNQLIDEVNIYEATKLAMLEAIKQLEGQLTQPDYLLIDAMTLDIAISQQSILKGDANSLSIAAASIVAKVTRDQMMANYDRIFPGYGFAKNAGYGTKEHLQGLKAYGITPIHRKSFEPVKSMCCNSTNP</sequence>
<feature type="chain" id="PRO_1000031213" description="Ribonuclease HII">
    <location>
        <begin position="1"/>
        <end position="263"/>
    </location>
</feature>
<feature type="domain" description="RNase H type-2" evidence="2">
    <location>
        <begin position="71"/>
        <end position="262"/>
    </location>
</feature>
<feature type="binding site" evidence="1">
    <location>
        <position position="77"/>
    </location>
    <ligand>
        <name>a divalent metal cation</name>
        <dbReference type="ChEBI" id="CHEBI:60240"/>
    </ligand>
</feature>
<feature type="binding site" evidence="1">
    <location>
        <position position="78"/>
    </location>
    <ligand>
        <name>a divalent metal cation</name>
        <dbReference type="ChEBI" id="CHEBI:60240"/>
    </ligand>
</feature>
<feature type="binding site" evidence="1">
    <location>
        <position position="172"/>
    </location>
    <ligand>
        <name>a divalent metal cation</name>
        <dbReference type="ChEBI" id="CHEBI:60240"/>
    </ligand>
</feature>
<proteinExistence type="inferred from homology"/>
<name>RNH2_STRPD</name>
<keyword id="KW-0963">Cytoplasm</keyword>
<keyword id="KW-0255">Endonuclease</keyword>
<keyword id="KW-0378">Hydrolase</keyword>
<keyword id="KW-0464">Manganese</keyword>
<keyword id="KW-0479">Metal-binding</keyword>
<keyword id="KW-0540">Nuclease</keyword>
<dbReference type="EC" id="3.1.26.4" evidence="1"/>
<dbReference type="EMBL" id="CP000260">
    <property type="protein sequence ID" value="ABF34062.1"/>
    <property type="molecule type" value="Genomic_DNA"/>
</dbReference>
<dbReference type="SMR" id="Q1JGT2"/>
<dbReference type="KEGG" id="sph:MGAS10270_Spy0997"/>
<dbReference type="HOGENOM" id="CLU_036532_2_1_9"/>
<dbReference type="Proteomes" id="UP000002436">
    <property type="component" value="Chromosome"/>
</dbReference>
<dbReference type="GO" id="GO:0005737">
    <property type="term" value="C:cytoplasm"/>
    <property type="evidence" value="ECO:0007669"/>
    <property type="project" value="UniProtKB-SubCell"/>
</dbReference>
<dbReference type="GO" id="GO:0032299">
    <property type="term" value="C:ribonuclease H2 complex"/>
    <property type="evidence" value="ECO:0007669"/>
    <property type="project" value="TreeGrafter"/>
</dbReference>
<dbReference type="GO" id="GO:0030145">
    <property type="term" value="F:manganese ion binding"/>
    <property type="evidence" value="ECO:0007669"/>
    <property type="project" value="UniProtKB-UniRule"/>
</dbReference>
<dbReference type="GO" id="GO:0003723">
    <property type="term" value="F:RNA binding"/>
    <property type="evidence" value="ECO:0007669"/>
    <property type="project" value="InterPro"/>
</dbReference>
<dbReference type="GO" id="GO:0004523">
    <property type="term" value="F:RNA-DNA hybrid ribonuclease activity"/>
    <property type="evidence" value="ECO:0007669"/>
    <property type="project" value="UniProtKB-UniRule"/>
</dbReference>
<dbReference type="GO" id="GO:0043137">
    <property type="term" value="P:DNA replication, removal of RNA primer"/>
    <property type="evidence" value="ECO:0007669"/>
    <property type="project" value="TreeGrafter"/>
</dbReference>
<dbReference type="GO" id="GO:0006298">
    <property type="term" value="P:mismatch repair"/>
    <property type="evidence" value="ECO:0007669"/>
    <property type="project" value="TreeGrafter"/>
</dbReference>
<dbReference type="CDD" id="cd07182">
    <property type="entry name" value="RNase_HII_bacteria_HII_like"/>
    <property type="match status" value="1"/>
</dbReference>
<dbReference type="FunFam" id="3.30.420.10:FF:000006">
    <property type="entry name" value="Ribonuclease HII"/>
    <property type="match status" value="1"/>
</dbReference>
<dbReference type="Gene3D" id="3.30.420.10">
    <property type="entry name" value="Ribonuclease H-like superfamily/Ribonuclease H"/>
    <property type="match status" value="1"/>
</dbReference>
<dbReference type="HAMAP" id="MF_00052_B">
    <property type="entry name" value="RNase_HII_B"/>
    <property type="match status" value="1"/>
</dbReference>
<dbReference type="InterPro" id="IPR022898">
    <property type="entry name" value="RNase_HII"/>
</dbReference>
<dbReference type="InterPro" id="IPR001352">
    <property type="entry name" value="RNase_HII/HIII"/>
</dbReference>
<dbReference type="InterPro" id="IPR024567">
    <property type="entry name" value="RNase_HII/HIII_dom"/>
</dbReference>
<dbReference type="InterPro" id="IPR012337">
    <property type="entry name" value="RNaseH-like_sf"/>
</dbReference>
<dbReference type="InterPro" id="IPR036397">
    <property type="entry name" value="RNaseH_sf"/>
</dbReference>
<dbReference type="NCBIfam" id="NF000594">
    <property type="entry name" value="PRK00015.1-1"/>
    <property type="match status" value="1"/>
</dbReference>
<dbReference type="NCBIfam" id="NF000595">
    <property type="entry name" value="PRK00015.1-3"/>
    <property type="match status" value="1"/>
</dbReference>
<dbReference type="PANTHER" id="PTHR10954">
    <property type="entry name" value="RIBONUCLEASE H2 SUBUNIT A"/>
    <property type="match status" value="1"/>
</dbReference>
<dbReference type="PANTHER" id="PTHR10954:SF18">
    <property type="entry name" value="RIBONUCLEASE HII"/>
    <property type="match status" value="1"/>
</dbReference>
<dbReference type="Pfam" id="PF01351">
    <property type="entry name" value="RNase_HII"/>
    <property type="match status" value="1"/>
</dbReference>
<dbReference type="SUPFAM" id="SSF53098">
    <property type="entry name" value="Ribonuclease H-like"/>
    <property type="match status" value="1"/>
</dbReference>
<dbReference type="PROSITE" id="PS51975">
    <property type="entry name" value="RNASE_H_2"/>
    <property type="match status" value="1"/>
</dbReference>
<comment type="function">
    <text evidence="1">Endonuclease that specifically degrades the RNA of RNA-DNA hybrids.</text>
</comment>
<comment type="catalytic activity">
    <reaction evidence="1">
        <text>Endonucleolytic cleavage to 5'-phosphomonoester.</text>
        <dbReference type="EC" id="3.1.26.4"/>
    </reaction>
</comment>
<comment type="cofactor">
    <cofactor evidence="1">
        <name>Mn(2+)</name>
        <dbReference type="ChEBI" id="CHEBI:29035"/>
    </cofactor>
    <cofactor evidence="1">
        <name>Mg(2+)</name>
        <dbReference type="ChEBI" id="CHEBI:18420"/>
    </cofactor>
    <text evidence="1">Manganese or magnesium. Binds 1 divalent metal ion per monomer in the absence of substrate. May bind a second metal ion after substrate binding.</text>
</comment>
<comment type="subcellular location">
    <subcellularLocation>
        <location evidence="1">Cytoplasm</location>
    </subcellularLocation>
</comment>
<comment type="similarity">
    <text evidence="1">Belongs to the RNase HII family.</text>
</comment>
<gene>
    <name evidence="1" type="primary">rnhB</name>
    <name type="ordered locus">MGAS10270_Spy0997</name>
</gene>
<protein>
    <recommendedName>
        <fullName evidence="1">Ribonuclease HII</fullName>
        <shortName evidence="1">RNase HII</shortName>
        <ecNumber evidence="1">3.1.26.4</ecNumber>
    </recommendedName>
</protein>